<organism>
    <name type="scientific">Schizosaccharomyces kambucha</name>
    <name type="common">Fission yeast</name>
    <dbReference type="NCBI Taxonomy" id="204045"/>
    <lineage>
        <taxon>Eukaryota</taxon>
        <taxon>Fungi</taxon>
        <taxon>Dikarya</taxon>
        <taxon>Ascomycota</taxon>
        <taxon>Taphrinomycotina</taxon>
        <taxon>Schizosaccharomycetes</taxon>
        <taxon>Schizosaccharomycetales</taxon>
        <taxon>Schizosaccharomycetaceae</taxon>
        <taxon>Schizosaccharomyces</taxon>
    </lineage>
</organism>
<proteinExistence type="inferred from homology"/>
<accession>Q6WRX6</accession>
<feature type="chain" id="PRO_0000048584" description="Mating-type M-specific polypeptide Mc">
    <location>
        <begin position="1"/>
        <end position="181"/>
    </location>
</feature>
<feature type="DNA-binding region" description="HMG box" evidence="2">
    <location>
        <begin position="103"/>
        <end position="171"/>
    </location>
</feature>
<gene>
    <name type="primary">matMc</name>
</gene>
<protein>
    <recommendedName>
        <fullName>Mating-type M-specific polypeptide Mc</fullName>
        <shortName>mat-Mc</shortName>
    </recommendedName>
</protein>
<evidence type="ECO:0000250" key="1"/>
<evidence type="ECO:0000255" key="2">
    <source>
        <dbReference type="PROSITE-ProRule" id="PRU00267"/>
    </source>
</evidence>
<dbReference type="EMBL" id="AY271822">
    <property type="protein sequence ID" value="AAQ82722.1"/>
    <property type="molecule type" value="Genomic_DNA"/>
</dbReference>
<dbReference type="SMR" id="Q6WRX6"/>
<dbReference type="GO" id="GO:0005634">
    <property type="term" value="C:nucleus"/>
    <property type="evidence" value="ECO:0007669"/>
    <property type="project" value="UniProtKB-SubCell"/>
</dbReference>
<dbReference type="GO" id="GO:0001228">
    <property type="term" value="F:DNA-binding transcription activator activity, RNA polymerase II-specific"/>
    <property type="evidence" value="ECO:0007669"/>
    <property type="project" value="TreeGrafter"/>
</dbReference>
<dbReference type="GO" id="GO:0000978">
    <property type="term" value="F:RNA polymerase II cis-regulatory region sequence-specific DNA binding"/>
    <property type="evidence" value="ECO:0007669"/>
    <property type="project" value="TreeGrafter"/>
</dbReference>
<dbReference type="GO" id="GO:0030154">
    <property type="term" value="P:cell differentiation"/>
    <property type="evidence" value="ECO:0007669"/>
    <property type="project" value="TreeGrafter"/>
</dbReference>
<dbReference type="CDD" id="cd01389">
    <property type="entry name" value="HMG-box_ROX1-like"/>
    <property type="match status" value="1"/>
</dbReference>
<dbReference type="FunFam" id="1.10.30.10:FF:000041">
    <property type="entry name" value="HMG box family protein"/>
    <property type="match status" value="1"/>
</dbReference>
<dbReference type="Gene3D" id="1.10.30.10">
    <property type="entry name" value="High mobility group box domain"/>
    <property type="match status" value="1"/>
</dbReference>
<dbReference type="InterPro" id="IPR009071">
    <property type="entry name" value="HMG_box_dom"/>
</dbReference>
<dbReference type="InterPro" id="IPR036910">
    <property type="entry name" value="HMG_box_dom_sf"/>
</dbReference>
<dbReference type="InterPro" id="IPR050140">
    <property type="entry name" value="SRY-related_HMG-box_TF-like"/>
</dbReference>
<dbReference type="PANTHER" id="PTHR10270:SF161">
    <property type="entry name" value="SEX-DETERMINING REGION Y PROTEIN"/>
    <property type="match status" value="1"/>
</dbReference>
<dbReference type="PANTHER" id="PTHR10270">
    <property type="entry name" value="SOX TRANSCRIPTION FACTOR"/>
    <property type="match status" value="1"/>
</dbReference>
<dbReference type="Pfam" id="PF00505">
    <property type="entry name" value="HMG_box"/>
    <property type="match status" value="1"/>
</dbReference>
<dbReference type="SMART" id="SM00398">
    <property type="entry name" value="HMG"/>
    <property type="match status" value="1"/>
</dbReference>
<dbReference type="SUPFAM" id="SSF47095">
    <property type="entry name" value="HMG-box"/>
    <property type="match status" value="1"/>
</dbReference>
<dbReference type="PROSITE" id="PS50118">
    <property type="entry name" value="HMG_BOX_2"/>
    <property type="match status" value="1"/>
</dbReference>
<sequence length="181" mass="21030">MDSHQELSAGSPISYDFLDPDWCFKRYLTKDALHSIETGKGAAYFVPDGFTPILIPNSQSYLLDGNSAQLPRPQPISFTLDQCKVPGYILKSLRKDTKSTERTPRPPNAFILYRKEKHATLLKSNPSINNSQVSKLVGEMWRNESKEVRMRYFKMSEFYKAQHQKMYPGYKYQPRKNKVKR</sequence>
<keyword id="KW-0238">DNA-binding</keyword>
<keyword id="KW-0539">Nucleus</keyword>
<keyword id="KW-0804">Transcription</keyword>
<keyword id="KW-0805">Transcription regulation</keyword>
<name>MATMC_SCHKA</name>
<comment type="function">
    <text evidence="1">Mating type proteins are sequence specific DNA-binding proteins that act as master switches in yeast differentiation by controlling gene expression in a cell type-specific fashion. Positive regulator of MFM genes. The HMG box recognizes the DNA sequence 5'-AACAAAG-3'. Required for conjugation and efficient meiosis (By similarity).</text>
</comment>
<comment type="subcellular location">
    <subcellularLocation>
        <location evidence="2">Nucleus</location>
    </subcellularLocation>
</comment>
<comment type="miscellaneous">
    <text evidence="1">There are three genetic loci for mating type genes in fission yeast, mat1, mat2-P and mat3-M. Cell type is determined by the alternate allele present in mat1, either P (plus) in a h+ or M (minus) in a h- cell. Mat2-P and mat3-M serve as donor of information that is transposed to mat1 during a switch of mating type (By similarity).</text>
</comment>
<reference key="1">
    <citation type="journal article" date="2003" name="Yeast">
        <title>DNA sequence of the mat2,3 region of Schizosaccharomyces kambucha shares high homology with the corresponding sequence from Sz. pombe.</title>
        <authorList>
            <person name="Singh G."/>
            <person name="Klar A.J.S."/>
        </authorList>
    </citation>
    <scope>NUCLEOTIDE SEQUENCE [GENOMIC DNA]</scope>
</reference>